<name>PSAC_SYNJB</name>
<organism>
    <name type="scientific">Synechococcus sp. (strain JA-2-3B'a(2-13))</name>
    <name type="common">Cyanobacteria bacterium Yellowstone B-Prime</name>
    <dbReference type="NCBI Taxonomy" id="321332"/>
    <lineage>
        <taxon>Bacteria</taxon>
        <taxon>Bacillati</taxon>
        <taxon>Cyanobacteriota</taxon>
        <taxon>Cyanophyceae</taxon>
        <taxon>Synechococcales</taxon>
        <taxon>Synechococcaceae</taxon>
        <taxon>Synechococcus</taxon>
    </lineage>
</organism>
<sequence length="82" mass="8921">MAHSVKIYDTCIGCTQCVRACPTDVLEMVPWKGNNKAGMIAAAPRTEDCVGCKRCETACPTDFLSIRVYLGPETTRSMGLAY</sequence>
<gene>
    <name evidence="2" type="primary">psaC</name>
    <name type="ordered locus">CYB_0549</name>
</gene>
<protein>
    <recommendedName>
        <fullName evidence="2">Photosystem I iron-sulfur center</fullName>
        <ecNumber evidence="2">1.97.1.12</ecNumber>
    </recommendedName>
    <alternativeName>
        <fullName evidence="2">9 kDa polypeptide</fullName>
    </alternativeName>
    <alternativeName>
        <fullName evidence="2">PSI-C</fullName>
    </alternativeName>
    <alternativeName>
        <fullName evidence="2">Photosystem I subunit VII</fullName>
    </alternativeName>
    <alternativeName>
        <fullName evidence="2">PsaC</fullName>
    </alternativeName>
</protein>
<reference key="1">
    <citation type="journal article" date="2007" name="ISME J.">
        <title>Population level functional diversity in a microbial community revealed by comparative genomic and metagenomic analyses.</title>
        <authorList>
            <person name="Bhaya D."/>
            <person name="Grossman A.R."/>
            <person name="Steunou A.-S."/>
            <person name="Khuri N."/>
            <person name="Cohan F.M."/>
            <person name="Hamamura N."/>
            <person name="Melendrez M.C."/>
            <person name="Bateson M.M."/>
            <person name="Ward D.M."/>
            <person name="Heidelberg J.F."/>
        </authorList>
    </citation>
    <scope>NUCLEOTIDE SEQUENCE [LARGE SCALE GENOMIC DNA]</scope>
    <source>
        <strain>JA-2-3B'a(2-13)</strain>
    </source>
</reference>
<accession>Q2JNW5</accession>
<evidence type="ECO:0000250" key="1"/>
<evidence type="ECO:0000255" key="2">
    <source>
        <dbReference type="HAMAP-Rule" id="MF_01303"/>
    </source>
</evidence>
<comment type="function">
    <text evidence="2">Apoprotein for the two 4Fe-4S centers FA and FB of photosystem I (PSI); essential for photochemical activity. FB is the terminal electron acceptor of PSI, donating electrons to ferredoxin. The C-terminus interacts with PsaA/B/D and helps assemble the protein into the PSI complex. Required for binding of PsaD and PsaE to PSI. PSI is a plastocyanin/cytochrome c6-ferredoxin oxidoreductase, converting photonic excitation into a charge separation, which transfers an electron from the donor P700 chlorophyll pair to the spectroscopically characterized acceptors A0, A1, FX, FA and FB in turn.</text>
</comment>
<comment type="catalytic activity">
    <reaction evidence="2">
        <text>reduced [plastocyanin] + hnu + oxidized [2Fe-2S]-[ferredoxin] = oxidized [plastocyanin] + reduced [2Fe-2S]-[ferredoxin]</text>
        <dbReference type="Rhea" id="RHEA:30407"/>
        <dbReference type="Rhea" id="RHEA-COMP:10000"/>
        <dbReference type="Rhea" id="RHEA-COMP:10001"/>
        <dbReference type="Rhea" id="RHEA-COMP:10039"/>
        <dbReference type="Rhea" id="RHEA-COMP:10040"/>
        <dbReference type="ChEBI" id="CHEBI:29036"/>
        <dbReference type="ChEBI" id="CHEBI:30212"/>
        <dbReference type="ChEBI" id="CHEBI:33737"/>
        <dbReference type="ChEBI" id="CHEBI:33738"/>
        <dbReference type="ChEBI" id="CHEBI:49552"/>
        <dbReference type="EC" id="1.97.1.12"/>
    </reaction>
</comment>
<comment type="cofactor">
    <cofactor evidence="2">
        <name>[4Fe-4S] cluster</name>
        <dbReference type="ChEBI" id="CHEBI:49883"/>
    </cofactor>
    <text evidence="2">Binds 2 [4Fe-4S] clusters. Cluster 2 is most probably the spectroscopically characterized electron acceptor FA and cluster 1 is most probably FB.</text>
</comment>
<comment type="subunit">
    <text evidence="2">The cyanobacterial PSI reaction center is composed of one copy each of PsaA,B,C,D,E,F,I,J,K,L,M and X, and forms trimeric complexes.</text>
</comment>
<comment type="subcellular location">
    <subcellularLocation>
        <location evidence="2">Cellular thylakoid membrane</location>
        <topology evidence="2">Peripheral membrane protein</topology>
        <orientation evidence="2">Cytoplasmic side</orientation>
    </subcellularLocation>
</comment>
<proteinExistence type="inferred from homology"/>
<dbReference type="EC" id="1.97.1.12" evidence="2"/>
<dbReference type="EMBL" id="CP000240">
    <property type="protein sequence ID" value="ABD01540.1"/>
    <property type="molecule type" value="Genomic_DNA"/>
</dbReference>
<dbReference type="RefSeq" id="WP_011432199.1">
    <property type="nucleotide sequence ID" value="NC_007776.1"/>
</dbReference>
<dbReference type="SMR" id="Q2JNW5"/>
<dbReference type="STRING" id="321332.CYB_0549"/>
<dbReference type="KEGG" id="cyb:CYB_0549"/>
<dbReference type="eggNOG" id="COG1143">
    <property type="taxonomic scope" value="Bacteria"/>
</dbReference>
<dbReference type="HOGENOM" id="CLU_139698_8_0_3"/>
<dbReference type="OrthoDB" id="9804603at2"/>
<dbReference type="Proteomes" id="UP000001938">
    <property type="component" value="Chromosome"/>
</dbReference>
<dbReference type="GO" id="GO:0009522">
    <property type="term" value="C:photosystem I"/>
    <property type="evidence" value="ECO:0007669"/>
    <property type="project" value="UniProtKB-KW"/>
</dbReference>
<dbReference type="GO" id="GO:0031676">
    <property type="term" value="C:plasma membrane-derived thylakoid membrane"/>
    <property type="evidence" value="ECO:0007669"/>
    <property type="project" value="UniProtKB-SubCell"/>
</dbReference>
<dbReference type="GO" id="GO:0051539">
    <property type="term" value="F:4 iron, 4 sulfur cluster binding"/>
    <property type="evidence" value="ECO:0007669"/>
    <property type="project" value="UniProtKB-KW"/>
</dbReference>
<dbReference type="GO" id="GO:0009055">
    <property type="term" value="F:electron transfer activity"/>
    <property type="evidence" value="ECO:0007669"/>
    <property type="project" value="UniProtKB-UniRule"/>
</dbReference>
<dbReference type="GO" id="GO:0046872">
    <property type="term" value="F:metal ion binding"/>
    <property type="evidence" value="ECO:0007669"/>
    <property type="project" value="UniProtKB-KW"/>
</dbReference>
<dbReference type="GO" id="GO:0016491">
    <property type="term" value="F:oxidoreductase activity"/>
    <property type="evidence" value="ECO:0007669"/>
    <property type="project" value="UniProtKB-KW"/>
</dbReference>
<dbReference type="GO" id="GO:0009773">
    <property type="term" value="P:photosynthetic electron transport in photosystem I"/>
    <property type="evidence" value="ECO:0007669"/>
    <property type="project" value="InterPro"/>
</dbReference>
<dbReference type="FunFam" id="3.30.70.20:FF:000001">
    <property type="entry name" value="Photosystem I iron-sulfur center"/>
    <property type="match status" value="1"/>
</dbReference>
<dbReference type="Gene3D" id="3.30.70.20">
    <property type="match status" value="1"/>
</dbReference>
<dbReference type="HAMAP" id="MF_01303">
    <property type="entry name" value="PSI_PsaC"/>
    <property type="match status" value="1"/>
</dbReference>
<dbReference type="InterPro" id="IPR017896">
    <property type="entry name" value="4Fe4S_Fe-S-bd"/>
</dbReference>
<dbReference type="InterPro" id="IPR017900">
    <property type="entry name" value="4Fe4S_Fe_S_CS"/>
</dbReference>
<dbReference type="InterPro" id="IPR050157">
    <property type="entry name" value="PSI_iron-sulfur_center"/>
</dbReference>
<dbReference type="InterPro" id="IPR017491">
    <property type="entry name" value="PSI_PsaC"/>
</dbReference>
<dbReference type="NCBIfam" id="TIGR03048">
    <property type="entry name" value="PS_I_psaC"/>
    <property type="match status" value="1"/>
</dbReference>
<dbReference type="PANTHER" id="PTHR24960:SF79">
    <property type="entry name" value="PHOTOSYSTEM I IRON-SULFUR CENTER"/>
    <property type="match status" value="1"/>
</dbReference>
<dbReference type="PANTHER" id="PTHR24960">
    <property type="entry name" value="PHOTOSYSTEM I IRON-SULFUR CENTER-RELATED"/>
    <property type="match status" value="1"/>
</dbReference>
<dbReference type="Pfam" id="PF12838">
    <property type="entry name" value="Fer4_7"/>
    <property type="match status" value="1"/>
</dbReference>
<dbReference type="SUPFAM" id="SSF54862">
    <property type="entry name" value="4Fe-4S ferredoxins"/>
    <property type="match status" value="1"/>
</dbReference>
<dbReference type="PROSITE" id="PS00198">
    <property type="entry name" value="4FE4S_FER_1"/>
    <property type="match status" value="2"/>
</dbReference>
<dbReference type="PROSITE" id="PS51379">
    <property type="entry name" value="4FE4S_FER_2"/>
    <property type="match status" value="2"/>
</dbReference>
<keyword id="KW-0004">4Fe-4S</keyword>
<keyword id="KW-0249">Electron transport</keyword>
<keyword id="KW-0408">Iron</keyword>
<keyword id="KW-0411">Iron-sulfur</keyword>
<keyword id="KW-0472">Membrane</keyword>
<keyword id="KW-0479">Metal-binding</keyword>
<keyword id="KW-0560">Oxidoreductase</keyword>
<keyword id="KW-0602">Photosynthesis</keyword>
<keyword id="KW-0603">Photosystem I</keyword>
<keyword id="KW-1185">Reference proteome</keyword>
<keyword id="KW-0677">Repeat</keyword>
<keyword id="KW-0793">Thylakoid</keyword>
<keyword id="KW-0813">Transport</keyword>
<feature type="initiator methionine" description="Removed" evidence="1">
    <location>
        <position position="1"/>
    </location>
</feature>
<feature type="chain" id="PRO_0000292105" description="Photosystem I iron-sulfur center">
    <location>
        <begin position="2"/>
        <end position="82"/>
    </location>
</feature>
<feature type="domain" description="4Fe-4S ferredoxin-type 1" evidence="2">
    <location>
        <begin position="2"/>
        <end position="31"/>
    </location>
</feature>
<feature type="domain" description="4Fe-4S ferredoxin-type 2" evidence="2">
    <location>
        <begin position="40"/>
        <end position="69"/>
    </location>
</feature>
<feature type="binding site" evidence="2">
    <location>
        <position position="11"/>
    </location>
    <ligand>
        <name>[4Fe-4S] cluster</name>
        <dbReference type="ChEBI" id="CHEBI:49883"/>
        <label>1</label>
    </ligand>
</feature>
<feature type="binding site" evidence="2">
    <location>
        <position position="14"/>
    </location>
    <ligand>
        <name>[4Fe-4S] cluster</name>
        <dbReference type="ChEBI" id="CHEBI:49883"/>
        <label>1</label>
    </ligand>
</feature>
<feature type="binding site" evidence="2">
    <location>
        <position position="17"/>
    </location>
    <ligand>
        <name>[4Fe-4S] cluster</name>
        <dbReference type="ChEBI" id="CHEBI:49883"/>
        <label>1</label>
    </ligand>
</feature>
<feature type="binding site" evidence="2">
    <location>
        <position position="21"/>
    </location>
    <ligand>
        <name>[4Fe-4S] cluster</name>
        <dbReference type="ChEBI" id="CHEBI:49883"/>
        <label>2</label>
    </ligand>
</feature>
<feature type="binding site" evidence="2">
    <location>
        <position position="49"/>
    </location>
    <ligand>
        <name>[4Fe-4S] cluster</name>
        <dbReference type="ChEBI" id="CHEBI:49883"/>
        <label>2</label>
    </ligand>
</feature>
<feature type="binding site" evidence="2">
    <location>
        <position position="52"/>
    </location>
    <ligand>
        <name>[4Fe-4S] cluster</name>
        <dbReference type="ChEBI" id="CHEBI:49883"/>
        <label>2</label>
    </ligand>
</feature>
<feature type="binding site" evidence="2">
    <location>
        <position position="55"/>
    </location>
    <ligand>
        <name>[4Fe-4S] cluster</name>
        <dbReference type="ChEBI" id="CHEBI:49883"/>
        <label>2</label>
    </ligand>
</feature>
<feature type="binding site" evidence="2">
    <location>
        <position position="59"/>
    </location>
    <ligand>
        <name>[4Fe-4S] cluster</name>
        <dbReference type="ChEBI" id="CHEBI:49883"/>
        <label>1</label>
    </ligand>
</feature>